<comment type="function">
    <text evidence="1 2 3 5 6 7 8 11 12 13 14 15 16 17 19 21 22 24 25 26 27 28">E1-like activating enzyme involved in the 2 ubiquitin-like systems required for cytoplasm to vacuole transport (Cvt) and autophagy. Activates ATG12 for its conjugation with ATG5 and ATG8 for its conjugation with phosphatidylethanolamine. Both systems are needed for the ATG8 association to Cvt vesicles and autophagosomes membranes. Autophagy is essential for maintenance of amino acid levels and protein synthesis under nitrogen starvation. Required for selective autophagic degradation of the nucleus (nucleophagy) as well as for mitophagy which contributes to regulate mitochondrial quantity and quality by eliminating the mitochondria to a basal level to fulfill cellular energy requirements and preventing excess ROS production. Plays a role in the regulation of filamentous growth and chronological longevity.</text>
</comment>
<comment type="subunit">
    <text evidence="2 3 4 9 10 13 18 19 20 23 25">Homodimer; homodimerization is required for ATP-binding (PubMed:11139573, PubMed:21193819, PubMed:29295865). Interacts with ATG8 through a thioester bond between Cys-507 and the C-terminal 'Gly-116' of ATG8 and with ATG12 through a thioester bond between Cys-507 and the C-terminal 'Gly-186' of ATG12 (PubMed:10233150, PubMed:11100732, PubMed:16874032, PubMed:18544538, PubMed:22055191). Also interacts with ATG3 (PubMed:11139573, PubMed:17227760, PubMed:22056771, PubMed:23142976).</text>
</comment>
<comment type="interaction">
    <interactant intactId="EBI-2677">
        <id>P38862</id>
    </interactant>
    <interactant intactId="EBI-36629">
        <id>Q07879</id>
        <label>ATG10</label>
    </interactant>
    <organismsDiffer>false</organismsDiffer>
    <experiments>7</experiments>
</comment>
<comment type="interaction">
    <interactant intactId="EBI-2677">
        <id>P38862</id>
    </interactant>
    <interactant intactId="EBI-3381">
        <id>P40344</id>
        <label>ATG3</label>
    </interactant>
    <organismsDiffer>false</organismsDiffer>
    <experiments>10</experiments>
</comment>
<comment type="interaction">
    <interactant intactId="EBI-2677">
        <id>P38862</id>
    </interactant>
    <interactant intactId="EBI-2677">
        <id>P38862</id>
        <label>ATG7</label>
    </interactant>
    <organismsDiffer>false</organismsDiffer>
    <experiments>3</experiments>
</comment>
<comment type="interaction">
    <interactant intactId="EBI-2677">
        <id>P38862</id>
    </interactant>
    <interactant intactId="EBI-2684">
        <id>P38182</id>
        <label>ATG8</label>
    </interactant>
    <organismsDiffer>false</organismsDiffer>
    <experiments>12</experiments>
</comment>
<comment type="interaction">
    <interactant intactId="EBI-2677">
        <id>P38862</id>
    </interactant>
    <interactant intactId="EBI-373144">
        <id>Q9GZQ8</id>
        <label>MAP1LC3B</label>
    </interactant>
    <organismsDiffer>true</organismsDiffer>
    <experiments>2</experiments>
</comment>
<comment type="subcellular location">
    <subcellularLocation>
        <location>Cytoplasm</location>
    </subcellularLocation>
    <subcellularLocation>
        <location>Preautophagosomal structure</location>
    </subcellularLocation>
</comment>
<comment type="domain">
    <text>The C-terminal 40 residues are required for homodimerization, as well as the interactions with ATG3, ATG8 and ATG12; and the C-terminal 17 residues are required for the ATG8 lipidation.</text>
</comment>
<comment type="domain">
    <text>The GxGxxG motif is important for the function, possibly through binding with ATP.</text>
</comment>
<comment type="similarity">
    <text evidence="29">Belongs to the ATG7 family.</text>
</comment>
<sequence>MSSERVLSYAPAFKSFLDTSFFQELSRLKLDVLKLDSTCQPLTVNLDLHNIPKSADQVPLFLTNRSFEKHNNKRTNEVPLQGSIFNFNVLDEFKNLDKQLFLHQRALECWEDGIKDINKCVSFVIISFADLKKYRFYYWLGVPCFQRPSSTVLHVRPEPSLKGLFSKCQKWFDVNYSKWVCILDADDEIVNYDKCIIRKTKVLAIRDTSTMENVPSALTKNFLSVLQYDVPDLIDFKLLIIRQNEGSFALNATFASIDPQSSSSNPDMKVSGWERNVQGKLAPRVVDLSSLLDPLKIADQSVDLNLKLMKWRILPDLNLDIIKNTKVLLLGAGTLGCYVSRALIAWGVRKITFVDNGTVSYSNPVRQALYNFEDCGKPKAELAAASLKRIFPLMDATGVKLSIPMIGHKLVNEEAQHKDFDRLRALIKEHDIIFLLVDSRESRWLPSLLSNIENKTVINAALGFDSYLVMRHGNRDEQSSKQLGCYFCHDVVAPTDSLTDRTLDQMCTVTRPGVAMMASSLAVELMTSLLQTKYSGSETTVLGDIPHQIRGFLHNFSILKLETPAYEHCPACSPKVIEAFTDLGWEFVKKALEHPLYLEEISGLSVIKQEVERLGNDVFEWEDDESDEIA</sequence>
<reference key="1">
    <citation type="journal article" date="1998" name="Nature">
        <title>A protein conjugation system essential for autophagy.</title>
        <authorList>
            <person name="Mizushima N."/>
            <person name="Noda T."/>
            <person name="Yoshimori T."/>
            <person name="Tanaka Y."/>
            <person name="Ishii T."/>
            <person name="George M.D."/>
            <person name="Klionsky D.J."/>
            <person name="Ohsumi M."/>
            <person name="Ohsumi Y."/>
        </authorList>
    </citation>
    <scope>NUCLEOTIDE SEQUENCE [GENOMIC DNA]</scope>
    <scope>FUNCTION</scope>
    <source>
        <strain>ATCC 26109 / X2180</strain>
    </source>
</reference>
<reference key="2">
    <citation type="journal article" date="1994" name="Science">
        <title>Complete nucleotide sequence of Saccharomyces cerevisiae chromosome VIII.</title>
        <authorList>
            <person name="Johnston M."/>
            <person name="Andrews S."/>
            <person name="Brinkman R."/>
            <person name="Cooper J."/>
            <person name="Ding H."/>
            <person name="Dover J."/>
            <person name="Du Z."/>
            <person name="Favello A."/>
            <person name="Fulton L."/>
            <person name="Gattung S."/>
            <person name="Geisel C."/>
            <person name="Kirsten J."/>
            <person name="Kucaba T."/>
            <person name="Hillier L.W."/>
            <person name="Jier M."/>
            <person name="Johnston L."/>
            <person name="Langston Y."/>
            <person name="Latreille P."/>
            <person name="Louis E.J."/>
            <person name="Macri C."/>
            <person name="Mardis E."/>
            <person name="Menezes S."/>
            <person name="Mouser L."/>
            <person name="Nhan M."/>
            <person name="Rifkin L."/>
            <person name="Riles L."/>
            <person name="St Peter H."/>
            <person name="Trevaskis E."/>
            <person name="Vaughan K."/>
            <person name="Vignati D."/>
            <person name="Wilcox L."/>
            <person name="Wohldman P."/>
            <person name="Waterston R."/>
            <person name="Wilson R."/>
            <person name="Vaudin M."/>
        </authorList>
    </citation>
    <scope>NUCLEOTIDE SEQUENCE [LARGE SCALE GENOMIC DNA]</scope>
    <source>
        <strain>ATCC 204508 / S288c</strain>
    </source>
</reference>
<reference key="3">
    <citation type="journal article" date="2014" name="G3 (Bethesda)">
        <title>The reference genome sequence of Saccharomyces cerevisiae: Then and now.</title>
        <authorList>
            <person name="Engel S.R."/>
            <person name="Dietrich F.S."/>
            <person name="Fisk D.G."/>
            <person name="Binkley G."/>
            <person name="Balakrishnan R."/>
            <person name="Costanzo M.C."/>
            <person name="Dwight S.S."/>
            <person name="Hitz B.C."/>
            <person name="Karra K."/>
            <person name="Nash R.S."/>
            <person name="Weng S."/>
            <person name="Wong E.D."/>
            <person name="Lloyd P."/>
            <person name="Skrzypek M.S."/>
            <person name="Miyasato S.R."/>
            <person name="Simison M."/>
            <person name="Cherry J.M."/>
        </authorList>
    </citation>
    <scope>GENOME REANNOTATION</scope>
    <source>
        <strain>ATCC 204508 / S288c</strain>
    </source>
</reference>
<reference key="4">
    <citation type="journal article" date="1993" name="FEBS Lett.">
        <title>Isolation and characterization of autophagy-defective mutants of Saccharomyces cerevisiae.</title>
        <authorList>
            <person name="Tsukada M."/>
            <person name="Ohsumi Y."/>
        </authorList>
    </citation>
    <scope>FUNCTION</scope>
</reference>
<reference key="5">
    <citation type="journal article" date="1995" name="J. Cell Biol.">
        <title>Isolation and characterization of yeast mutants in the cytoplasm to vacuole protein targeting pathway.</title>
        <authorList>
            <person name="Harding T.M."/>
            <person name="Morano K.A."/>
            <person name="Scott S.V."/>
            <person name="Klionsky D.J."/>
        </authorList>
    </citation>
    <scope>FUNCTION</scope>
</reference>
<reference key="6">
    <citation type="journal article" date="1999" name="Mol. Biol. Cell">
        <title>Apg7p/Cvt2p is required for the cytoplasm-to-vacuole targeting, macroautophagy, and peroxisome degradation pathways.</title>
        <authorList>
            <person name="Kim J."/>
            <person name="Dalton V.M."/>
            <person name="Eggerton K.P."/>
            <person name="Scott S.V."/>
            <person name="Klionsky D.J."/>
        </authorList>
    </citation>
    <scope>FUNCTION</scope>
    <scope>SUBCELLULAR LOCATION</scope>
</reference>
<reference key="7">
    <citation type="journal article" date="1999" name="Mol. Biol. Cell">
        <title>Apg7p/Cvt2p: a novel protein-activating enzyme essential for autophagy.</title>
        <authorList>
            <person name="Tanida I."/>
            <person name="Mizushima N."/>
            <person name="Kiyooka M."/>
            <person name="Ohsumi M."/>
            <person name="Ueno T."/>
            <person name="Ohsumi Y."/>
            <person name="Kominami E."/>
        </authorList>
    </citation>
    <scope>FUNCTION</scope>
    <scope>SUBCELLULAR LOCATION</scope>
    <scope>INTERACTION WITH ATG12</scope>
    <scope>MUTAGENESIS OF GLY-333 AND CYS-507</scope>
</reference>
<reference key="8">
    <citation type="journal article" date="2000" name="Nature">
        <title>A ubiquitin-like system mediates protein lipidation.</title>
        <authorList>
            <person name="Ichimura Y."/>
            <person name="Kirisako T."/>
            <person name="Takao T."/>
            <person name="Satomi Y."/>
            <person name="Shimonishi Y."/>
            <person name="Ishihara N."/>
            <person name="Mizushima N."/>
            <person name="Tanida I."/>
            <person name="Kominami E."/>
            <person name="Ohsumi M."/>
            <person name="Noda T."/>
            <person name="Ohsumi Y."/>
        </authorList>
    </citation>
    <scope>FUNCTION</scope>
    <scope>INTERACTION WITH ATG8</scope>
    <scope>MUTAGENESIS OF GLY-333 AND CYS-507</scope>
</reference>
<reference key="9">
    <citation type="journal article" date="2001" name="J. Biol. Chem.">
        <title>The C-terminal region of an Apg7p/Cvt2p is required for homodimerization and is essential for its E1 activity and E1-E2 complex formation.</title>
        <authorList>
            <person name="Komatsu M."/>
            <person name="Tanida I."/>
            <person name="Ueno T."/>
            <person name="Ohsumi M."/>
            <person name="Ohsumi Y."/>
            <person name="Kominami E."/>
        </authorList>
    </citation>
    <scope>HOMODIMERIZATION</scope>
    <scope>INTERACTION WITH ATG3; ATG8 AND ATG12</scope>
</reference>
<reference key="10">
    <citation type="journal article" date="2001" name="J. Cell Biol.">
        <title>Membrane recruitment of Aut7p in the autophagy and cytoplasm to vacuole targeting pathways requires Aut1p, Aut2p, and the autophagy conjugation complex.</title>
        <authorList>
            <person name="Kim J."/>
            <person name="Huang W.-P."/>
            <person name="Klionsky D.J."/>
        </authorList>
    </citation>
    <scope>FUNCTION</scope>
</reference>
<reference key="11">
    <citation type="journal article" date="2003" name="Dev. Cell">
        <title>A unified nomenclature for yeast autophagy-related genes.</title>
        <authorList>
            <person name="Klionsky D.J."/>
            <person name="Cregg J.M."/>
            <person name="Dunn W.A. Jr."/>
            <person name="Emr S.D."/>
            <person name="Sakai Y."/>
            <person name="Sandoval I.V."/>
            <person name="Sibirny A."/>
            <person name="Subramani S."/>
            <person name="Thumm M."/>
            <person name="Veenhuis M."/>
            <person name="Ohsumi Y."/>
        </authorList>
    </citation>
    <scope>NOMENCLATURE</scope>
</reference>
<reference key="12">
    <citation type="journal article" date="2003" name="FEBS Lett.">
        <title>The carboxyl terminal 17 amino acids within Apg7 are essential for Apg8 lipidation, but not for Apg12 conjugation.</title>
        <authorList>
            <person name="Yamazaki-Sato H."/>
            <person name="Tanida I."/>
            <person name="Ueno T."/>
            <person name="Kominami E."/>
        </authorList>
    </citation>
    <scope>FUNCTION</scope>
</reference>
<reference key="13">
    <citation type="journal article" date="2004" name="J. Biol. Chem.">
        <title>In vivo and in vitro reconstitution of atg8 conjugation essential for autophagy.</title>
        <authorList>
            <person name="Ichimura Y."/>
            <person name="Imamura Y."/>
            <person name="Emoto K."/>
            <person name="Umeda M."/>
            <person name="Noda T."/>
            <person name="Ohsumi Y."/>
        </authorList>
    </citation>
    <scope>FUNCTION</scope>
    <scope>MUTAGENESIS OF CYS-507</scope>
</reference>
<reference key="14">
    <citation type="journal article" date="2005" name="Autophagy">
        <title>Structure-function relationship of Atg12, a ubiquitin-like modifier essential for autophagy.</title>
        <authorList>
            <person name="Hanada T."/>
            <person name="Ohsumi Y."/>
        </authorList>
    </citation>
    <scope>INTERACTION WITH ATG12</scope>
</reference>
<reference key="15">
    <citation type="journal article" date="2005" name="J. Biol. Chem.">
        <title>Autophagy is required for maintenance of amino acid levels and protein synthesis under nitrogen starvation.</title>
        <authorList>
            <person name="Onodera J."/>
            <person name="Ohsumi Y."/>
        </authorList>
    </citation>
    <scope>FUNCTION</scope>
</reference>
<reference key="16">
    <citation type="journal article" date="2007" name="Cell">
        <title>Atg8, a ubiquitin-like protein required for autophagosome formation, mediates membrane tethering and hemifusion.</title>
        <authorList>
            <person name="Nakatogawa H."/>
            <person name="Ichimura Y."/>
            <person name="Ohsumi Y."/>
        </authorList>
    </citation>
    <scope>FUNCTION</scope>
</reference>
<reference key="17">
    <citation type="journal article" date="2007" name="Genetics">
        <title>An interrelationship between autophagy and filamentous growth in budding yeast.</title>
        <authorList>
            <person name="Ma J."/>
            <person name="Jin R."/>
            <person name="Jia X."/>
            <person name="Dobry C.J."/>
            <person name="Wang L."/>
            <person name="Reggiori F."/>
            <person name="Zhu J."/>
            <person name="Kumar A."/>
        </authorList>
    </citation>
    <scope>FUNCTION</scope>
</reference>
<reference key="18">
    <citation type="journal article" date="2007" name="J. Biol. Chem.">
        <title>The crystal structure of Atg3, an autophagy-related ubiquitin carrier protein (E2) enzyme that mediates Atg8 lipidation.</title>
        <authorList>
            <person name="Yamada Y."/>
            <person name="Suzuki N.N."/>
            <person name="Hanada T."/>
            <person name="Ichimura Y."/>
            <person name="Kumeta H."/>
            <person name="Fujioka Y."/>
            <person name="Ohsumi Y."/>
            <person name="Inagaki F."/>
        </authorList>
    </citation>
    <scope>INTERACTION WITH ATG3</scope>
</reference>
<reference key="19">
    <citation type="journal article" date="2008" name="Autophagy">
        <title>Localization of autophagy-related proteins in yeast using a versatile plasmid-based resource of fluorescent protein fusions.</title>
        <authorList>
            <person name="Ma J."/>
            <person name="Bharucha N."/>
            <person name="Dobry C.J."/>
            <person name="Frisch R.L."/>
            <person name="Lawson S."/>
            <person name="Kumar A."/>
        </authorList>
    </citation>
    <scope>SUBCELLULAR LOCATION</scope>
</reference>
<reference key="20">
    <citation type="journal article" date="2008" name="J. Biol. Chem.">
        <title>Physiological pH and acidic phospholipids contribute to substrate specificity in lipidation of Atg8.</title>
        <authorList>
            <person name="Oh-oka K."/>
            <person name="Nakatogawa H."/>
            <person name="Ohsumi Y."/>
        </authorList>
    </citation>
    <scope>FUNCTION</scope>
    <scope>INTERACTION WITH ATG8</scope>
</reference>
<reference key="21">
    <citation type="journal article" date="2008" name="J. Cell Biol.">
        <title>In vivo reconstitution of autophagy in Saccharomyces cerevisiae.</title>
        <authorList>
            <person name="Cao Y."/>
            <person name="Cheong H."/>
            <person name="Song H."/>
            <person name="Klionsky D.J."/>
        </authorList>
    </citation>
    <scope>FUNCTION</scope>
</reference>
<reference key="22">
    <citation type="journal article" date="2008" name="Mol. Biol. Cell">
        <title>Piecemeal microautophagy of the nucleus requires the core macroautophagy genes.</title>
        <authorList>
            <person name="Krick R."/>
            <person name="Muehe Y."/>
            <person name="Prick T."/>
            <person name="Bremer S."/>
            <person name="Schlotterhose P."/>
            <person name="Eskelinen E.L."/>
            <person name="Millen J."/>
            <person name="Goldfarb D.S."/>
            <person name="Thumm M."/>
        </authorList>
    </citation>
    <scope>FUNCTION</scope>
</reference>
<reference key="23">
    <citation type="journal article" date="2009" name="Aging Cell">
        <title>Autophagy and amino acid homeostasis are required for chronological longevity in Saccharomyces cerevisiae.</title>
        <authorList>
            <person name="Alvers A.L."/>
            <person name="Fishwick L.K."/>
            <person name="Wood M.S."/>
            <person name="Hu D."/>
            <person name="Chung H.S."/>
            <person name="Dunn W.A. Jr."/>
            <person name="Aris J.P."/>
        </authorList>
    </citation>
    <scope>FUNCTION</scope>
</reference>
<reference key="24">
    <citation type="journal article" date="2009" name="Biochem. Biophys. Res. Commun.">
        <title>Lap3 is a selective target of autophagy in yeast, Saccharomyces cerevisiae.</title>
        <authorList>
            <person name="Kageyama T."/>
            <person name="Suzuki K."/>
            <person name="Ohsumi Y."/>
        </authorList>
    </citation>
    <scope>FUNCTION</scope>
</reference>
<reference key="25">
    <citation type="journal article" date="2010" name="J. Microbiol. Biotechnol.">
        <title>Purification and characterization of a ubiquitin-like system for autophagosome formation.</title>
        <authorList>
            <person name="Bae J.Y."/>
            <person name="Park H.H."/>
        </authorList>
    </citation>
    <scope>SUBUNIT</scope>
</reference>
<reference key="26">
    <citation type="journal article" date="2012" name="Cell Death Dis.">
        <title>14-3-3 protects against stress-induced apoptosis.</title>
        <authorList>
            <person name="Clapp C."/>
            <person name="Portt L."/>
            <person name="Khoury C."/>
            <person name="Sheibani S."/>
            <person name="Norman G."/>
            <person name="Ebner P."/>
            <person name="Eid R."/>
            <person name="Vali H."/>
            <person name="Mandato C.A."/>
            <person name="Madeo F."/>
            <person name="Greenwood M.T."/>
        </authorList>
    </citation>
    <scope>FUNCTION</scope>
</reference>
<reference key="27">
    <citation type="journal article" date="2012" name="PLoS ONE">
        <title>A late form of nucleophagy in Saccharomyces cerevisiae.</title>
        <authorList>
            <person name="Mijaljica D."/>
            <person name="Prescott M."/>
            <person name="Devenish R.J."/>
        </authorList>
    </citation>
    <scope>FUNCTION</scope>
</reference>
<reference key="28">
    <citation type="journal article" date="2013" name="FEBS Lett.">
        <title>Mitochondrial degradation during starvation is selective and temporally distinct from bulk autophagy in yeast.</title>
        <authorList>
            <person name="Eiyama A."/>
            <person name="Kondo-Okamoto N."/>
            <person name="Okamoto K."/>
        </authorList>
    </citation>
    <scope>FUNCTION</scope>
</reference>
<reference key="29">
    <citation type="journal article" date="2018" name="FASEB J.">
        <title>Trans-binding of UFM1 to UBA5 stimulates UBA5 homodimerization and ATP binding.</title>
        <authorList>
            <person name="Mashahreh B."/>
            <person name="Hassouna F."/>
            <person name="Soudah N."/>
            <person name="Cohen-Kfir E."/>
            <person name="Strulovich R."/>
            <person name="Haitin Y."/>
            <person name="Wiener R."/>
        </authorList>
    </citation>
    <scope>FUNCTION</scope>
    <scope>SUBUNIT</scope>
    <scope>ACTIVE SITE</scope>
    <scope>MUTAGENESIS OF CYS-507; ARG-511 AND GLU-524</scope>
</reference>
<reference key="30">
    <citation type="journal article" date="2011" name="Mol. Cell">
        <title>Atg8 transfer from Atg7 to Atg3: a distinctive E1-E2 architecture and mechanism in the autophagy pathway.</title>
        <authorList>
            <person name="Taherbhoy A.M."/>
            <person name="Tait S.W."/>
            <person name="Kaiser S.E."/>
            <person name="Williams A.H."/>
            <person name="Deng A."/>
            <person name="Nourse A."/>
            <person name="Hammel M."/>
            <person name="Kurinov I."/>
            <person name="Rock C.O."/>
            <person name="Green D.R."/>
            <person name="Schulman B.A."/>
        </authorList>
    </citation>
    <scope>X-RAY CRYSTALLOGRAPHY (1.60 ANGSTROMS)</scope>
</reference>
<reference key="31">
    <citation type="journal article" date="2011" name="Mol. Cell">
        <title>Structural basis of Atg8 activation by a homodimeric E1, Atg7.</title>
        <authorList>
            <person name="Noda N.N."/>
            <person name="Satoo K."/>
            <person name="Fujioka Y."/>
            <person name="Kumeta H."/>
            <person name="Ogura K."/>
            <person name="Nakatogawa H."/>
            <person name="Ohsumi Y."/>
            <person name="Inagaki F."/>
        </authorList>
    </citation>
    <scope>STRUCTURE BY NMR OF 601-630 IN COMPLEX WITH ATG8</scope>
    <scope>X-RAY CRYSTALLOGRAPHY (2.0 ANGSTROMS) IN COMPLEX WITH ARG8</scope>
    <scope>FUNCTION</scope>
    <scope>MUTAGENESIS OF ARG-443; SER-466; TYR-486; ASP-490 AND ARG-550</scope>
</reference>
<reference key="32">
    <citation type="journal article" date="2011" name="Nat. Struct. Mol. Biol.">
        <title>Insights into noncanonical E1 enzyme activation from the structure of autophagic E1 Atg7 with Atg8.</title>
        <authorList>
            <person name="Hong S.B."/>
            <person name="Kim B.W."/>
            <person name="Lee K.E."/>
            <person name="Kim S.W."/>
            <person name="Jeon H."/>
            <person name="Kim J."/>
            <person name="Song H.K."/>
        </authorList>
    </citation>
    <scope>X-RAY CRYSTALLOGRAPHY (1.91 ANGSTROMS) IN COMPLEX WITH ATG8</scope>
    <scope>INTERACTION WITH ATG3</scope>
</reference>
<reference key="33">
    <citation type="journal article" date="2012" name="Nat. Struct. Mol. Biol.">
        <title>Noncanonical E2 recruitment by the autophagy E1 revealed by Atg7-Atg3 and Atg7-Atg10 structures.</title>
        <authorList>
            <person name="Kaiser S.E."/>
            <person name="Mao K."/>
            <person name="Taherbhoy A.M."/>
            <person name="Yu S."/>
            <person name="Olszewski J.L."/>
            <person name="Duda D.M."/>
            <person name="Kurinov I."/>
            <person name="Deng A."/>
            <person name="Fenn T.D."/>
            <person name="Klionsky D.J."/>
            <person name="Schulman B.A."/>
        </authorList>
    </citation>
    <scope>X-RAY CRYSTALLOGRAPHY (1.7 ANGSTROMS) OF 1-613 IN COMPLEX WITH ATG3 AND ATG10</scope>
</reference>
<gene>
    <name type="primary">ATG7</name>
    <name type="synonym">APG7</name>
    <name type="synonym">CVT2</name>
    <name type="ordered locus">YHR171W</name>
</gene>
<proteinExistence type="evidence at protein level"/>
<dbReference type="EMBL" id="AB017925">
    <property type="protein sequence ID" value="BAA33474.1"/>
    <property type="molecule type" value="Genomic_DNA"/>
</dbReference>
<dbReference type="EMBL" id="U00027">
    <property type="protein sequence ID" value="AAB68016.1"/>
    <property type="molecule type" value="Genomic_DNA"/>
</dbReference>
<dbReference type="EMBL" id="BK006934">
    <property type="protein sequence ID" value="DAA06864.1"/>
    <property type="molecule type" value="Genomic_DNA"/>
</dbReference>
<dbReference type="PIR" id="S48910">
    <property type="entry name" value="S48910"/>
</dbReference>
<dbReference type="RefSeq" id="NP_012041.1">
    <property type="nucleotide sequence ID" value="NM_001179302.1"/>
</dbReference>
<dbReference type="PDB" id="2LI5">
    <property type="method" value="NMR"/>
    <property type="chains" value="B=601-630"/>
</dbReference>
<dbReference type="PDB" id="3RUI">
    <property type="method" value="X-ray"/>
    <property type="resolution" value="1.91 A"/>
    <property type="chains" value="A=293-630"/>
</dbReference>
<dbReference type="PDB" id="3RUJ">
    <property type="method" value="X-ray"/>
    <property type="resolution" value="2.10 A"/>
    <property type="chains" value="A=1-294"/>
</dbReference>
<dbReference type="PDB" id="3T7E">
    <property type="method" value="X-ray"/>
    <property type="resolution" value="2.25 A"/>
    <property type="chains" value="A=289-630"/>
</dbReference>
<dbReference type="PDB" id="3T7F">
    <property type="method" value="X-ray"/>
    <property type="resolution" value="1.89 A"/>
    <property type="chains" value="A=1-289"/>
</dbReference>
<dbReference type="PDB" id="3T7G">
    <property type="method" value="X-ray"/>
    <property type="resolution" value="2.08 A"/>
    <property type="chains" value="A/B=1-289"/>
</dbReference>
<dbReference type="PDB" id="3T7H">
    <property type="method" value="X-ray"/>
    <property type="resolution" value="1.60 A"/>
    <property type="chains" value="A/B=1-289"/>
</dbReference>
<dbReference type="PDB" id="3VH1">
    <property type="method" value="X-ray"/>
    <property type="resolution" value="3.00 A"/>
    <property type="chains" value="A=1-595"/>
</dbReference>
<dbReference type="PDB" id="3VH2">
    <property type="method" value="X-ray"/>
    <property type="resolution" value="3.30 A"/>
    <property type="chains" value="A=1-613"/>
</dbReference>
<dbReference type="PDB" id="3VH3">
    <property type="method" value="X-ray"/>
    <property type="resolution" value="2.00 A"/>
    <property type="chains" value="A=295-630"/>
</dbReference>
<dbReference type="PDB" id="3VH4">
    <property type="method" value="X-ray"/>
    <property type="resolution" value="2.65 A"/>
    <property type="chains" value="A=295-630"/>
</dbReference>
<dbReference type="PDB" id="4GSJ">
    <property type="method" value="X-ray"/>
    <property type="resolution" value="1.70 A"/>
    <property type="chains" value="A=1-289"/>
</dbReference>
<dbReference type="PDB" id="4GSK">
    <property type="method" value="X-ray"/>
    <property type="resolution" value="2.90 A"/>
    <property type="chains" value="A/B=1-613"/>
</dbReference>
<dbReference type="PDB" id="4GSL">
    <property type="method" value="X-ray"/>
    <property type="resolution" value="2.70 A"/>
    <property type="chains" value="A/B=1-613"/>
</dbReference>
<dbReference type="PDB" id="5YEC">
    <property type="method" value="X-ray"/>
    <property type="resolution" value="2.15 A"/>
    <property type="chains" value="A/C=295-630"/>
</dbReference>
<dbReference type="PDBsum" id="2LI5"/>
<dbReference type="PDBsum" id="3RUI"/>
<dbReference type="PDBsum" id="3RUJ"/>
<dbReference type="PDBsum" id="3T7E"/>
<dbReference type="PDBsum" id="3T7F"/>
<dbReference type="PDBsum" id="3T7G"/>
<dbReference type="PDBsum" id="3T7H"/>
<dbReference type="PDBsum" id="3VH1"/>
<dbReference type="PDBsum" id="3VH2"/>
<dbReference type="PDBsum" id="3VH3"/>
<dbReference type="PDBsum" id="3VH4"/>
<dbReference type="PDBsum" id="4GSJ"/>
<dbReference type="PDBsum" id="4GSK"/>
<dbReference type="PDBsum" id="4GSL"/>
<dbReference type="PDBsum" id="5YEC"/>
<dbReference type="BMRB" id="P38862"/>
<dbReference type="SMR" id="P38862"/>
<dbReference type="BioGRID" id="36605">
    <property type="interactions" value="126"/>
</dbReference>
<dbReference type="DIP" id="DIP-1196N"/>
<dbReference type="FunCoup" id="P38862">
    <property type="interactions" value="872"/>
</dbReference>
<dbReference type="IntAct" id="P38862">
    <property type="interactions" value="8"/>
</dbReference>
<dbReference type="MINT" id="P38862"/>
<dbReference type="STRING" id="4932.YHR171W"/>
<dbReference type="GlyGen" id="P38862">
    <property type="glycosylation" value="1 site"/>
</dbReference>
<dbReference type="iPTMnet" id="P38862"/>
<dbReference type="PaxDb" id="4932-YHR171W"/>
<dbReference type="PeptideAtlas" id="P38862"/>
<dbReference type="TopDownProteomics" id="P38862"/>
<dbReference type="EnsemblFungi" id="YHR171W_mRNA">
    <property type="protein sequence ID" value="YHR171W"/>
    <property type="gene ID" value="YHR171W"/>
</dbReference>
<dbReference type="GeneID" id="856576"/>
<dbReference type="KEGG" id="sce:YHR171W"/>
<dbReference type="AGR" id="SGD:S000001214"/>
<dbReference type="SGD" id="S000001214">
    <property type="gene designation" value="ATG7"/>
</dbReference>
<dbReference type="VEuPathDB" id="FungiDB:YHR171W"/>
<dbReference type="eggNOG" id="KOG2337">
    <property type="taxonomic scope" value="Eukaryota"/>
</dbReference>
<dbReference type="GeneTree" id="ENSGT00390000017509"/>
<dbReference type="HOGENOM" id="CLU_012998_2_1_1"/>
<dbReference type="InParanoid" id="P38862"/>
<dbReference type="OMA" id="RQIWDAI"/>
<dbReference type="OrthoDB" id="338614at2759"/>
<dbReference type="BioCyc" id="YEAST:G3O-31205-MONOMER"/>
<dbReference type="Reactome" id="R-SCE-1632852">
    <property type="pathway name" value="Macroautophagy"/>
</dbReference>
<dbReference type="Reactome" id="R-SCE-6798695">
    <property type="pathway name" value="Neutrophil degranulation"/>
</dbReference>
<dbReference type="Reactome" id="R-SCE-983168">
    <property type="pathway name" value="Antigen processing: Ubiquitination &amp; Proteasome degradation"/>
</dbReference>
<dbReference type="BioGRID-ORCS" id="856576">
    <property type="hits" value="0 hits in 10 CRISPR screens"/>
</dbReference>
<dbReference type="EvolutionaryTrace" id="P38862"/>
<dbReference type="PRO" id="PR:P38862"/>
<dbReference type="Proteomes" id="UP000002311">
    <property type="component" value="Chromosome VIII"/>
</dbReference>
<dbReference type="RNAct" id="P38862">
    <property type="molecule type" value="protein"/>
</dbReference>
<dbReference type="GO" id="GO:0005737">
    <property type="term" value="C:cytoplasm"/>
    <property type="evidence" value="ECO:0000318"/>
    <property type="project" value="GO_Central"/>
</dbReference>
<dbReference type="GO" id="GO:0005829">
    <property type="term" value="C:cytosol"/>
    <property type="evidence" value="ECO:0000314"/>
    <property type="project" value="SGD"/>
</dbReference>
<dbReference type="GO" id="GO:0097632">
    <property type="term" value="C:extrinsic component of phagophore assembly site membrane"/>
    <property type="evidence" value="ECO:0000314"/>
    <property type="project" value="UniProtKB"/>
</dbReference>
<dbReference type="GO" id="GO:0016020">
    <property type="term" value="C:membrane"/>
    <property type="evidence" value="ECO:0000314"/>
    <property type="project" value="SGD"/>
</dbReference>
<dbReference type="GO" id="GO:0005739">
    <property type="term" value="C:mitochondrion"/>
    <property type="evidence" value="ECO:0007005"/>
    <property type="project" value="SGD"/>
</dbReference>
<dbReference type="GO" id="GO:0000407">
    <property type="term" value="C:phagophore assembly site"/>
    <property type="evidence" value="ECO:0000314"/>
    <property type="project" value="SGD"/>
</dbReference>
<dbReference type="GO" id="GO:0019778">
    <property type="term" value="F:Atg12 activating enzyme activity"/>
    <property type="evidence" value="ECO:0000315"/>
    <property type="project" value="SGD"/>
</dbReference>
<dbReference type="GO" id="GO:0019779">
    <property type="term" value="F:Atg8 activating enzyme activity"/>
    <property type="evidence" value="ECO:0000315"/>
    <property type="project" value="SGD"/>
</dbReference>
<dbReference type="GO" id="GO:0042802">
    <property type="term" value="F:identical protein binding"/>
    <property type="evidence" value="ECO:0000353"/>
    <property type="project" value="IntAct"/>
</dbReference>
<dbReference type="GO" id="GO:0000045">
    <property type="term" value="P:autophagosome assembly"/>
    <property type="evidence" value="ECO:0000318"/>
    <property type="project" value="GO_Central"/>
</dbReference>
<dbReference type="GO" id="GO:0006914">
    <property type="term" value="P:autophagy"/>
    <property type="evidence" value="ECO:0000315"/>
    <property type="project" value="SGD"/>
</dbReference>
<dbReference type="GO" id="GO:0000422">
    <property type="term" value="P:autophagy of mitochondrion"/>
    <property type="evidence" value="ECO:0000315"/>
    <property type="project" value="SGD"/>
</dbReference>
<dbReference type="GO" id="GO:0006995">
    <property type="term" value="P:cellular response to nitrogen starvation"/>
    <property type="evidence" value="ECO:0000318"/>
    <property type="project" value="GO_Central"/>
</dbReference>
<dbReference type="GO" id="GO:0032258">
    <property type="term" value="P:cytoplasm to vacuole targeting by the Cvt pathway"/>
    <property type="evidence" value="ECO:0000315"/>
    <property type="project" value="SGD"/>
</dbReference>
<dbReference type="GO" id="GO:0016236">
    <property type="term" value="P:macroautophagy"/>
    <property type="evidence" value="ECO:0000315"/>
    <property type="project" value="SGD"/>
</dbReference>
<dbReference type="GO" id="GO:0000423">
    <property type="term" value="P:mitophagy"/>
    <property type="evidence" value="ECO:0000318"/>
    <property type="project" value="GO_Central"/>
</dbReference>
<dbReference type="GO" id="GO:0044804">
    <property type="term" value="P:nucleophagy"/>
    <property type="evidence" value="ECO:0000315"/>
    <property type="project" value="SGD"/>
</dbReference>
<dbReference type="GO" id="GO:0034727">
    <property type="term" value="P:piecemeal microautophagy of the nucleus"/>
    <property type="evidence" value="ECO:0000315"/>
    <property type="project" value="SGD"/>
</dbReference>
<dbReference type="GO" id="GO:0032446">
    <property type="term" value="P:protein modification by small protein conjugation"/>
    <property type="evidence" value="ECO:0000315"/>
    <property type="project" value="SGD"/>
</dbReference>
<dbReference type="CDD" id="cd01486">
    <property type="entry name" value="Apg7"/>
    <property type="match status" value="1"/>
</dbReference>
<dbReference type="DisProt" id="DP02249"/>
<dbReference type="FunFam" id="3.40.50.720:FF:000243">
    <property type="entry name" value="Ubiquitin-like modifier-activating enzyme ATG7"/>
    <property type="match status" value="1"/>
</dbReference>
<dbReference type="Gene3D" id="3.40.50.720">
    <property type="entry name" value="NAD(P)-binding Rossmann-like Domain"/>
    <property type="match status" value="1"/>
</dbReference>
<dbReference type="Gene3D" id="3.40.140.100">
    <property type="entry name" value="Ubiquitin-like modifier-activating enzyme ATG7 C-terminal domain"/>
    <property type="match status" value="1"/>
</dbReference>
<dbReference type="Gene3D" id="3.40.140.70">
    <property type="entry name" value="Ubiquitin-like modifier-activating enzyme ATG7 N-terminal domain"/>
    <property type="match status" value="1"/>
</dbReference>
<dbReference type="InterPro" id="IPR006285">
    <property type="entry name" value="Atg7"/>
</dbReference>
<dbReference type="InterPro" id="IPR032197">
    <property type="entry name" value="Atg7_N"/>
</dbReference>
<dbReference type="InterPro" id="IPR042522">
    <property type="entry name" value="Atg7_N_1"/>
</dbReference>
<dbReference type="InterPro" id="IPR042523">
    <property type="entry name" value="Atg7_N_2"/>
</dbReference>
<dbReference type="InterPro" id="IPR045886">
    <property type="entry name" value="ThiF/MoeB/HesA"/>
</dbReference>
<dbReference type="InterPro" id="IPR000594">
    <property type="entry name" value="ThiF_NAD_FAD-bd"/>
</dbReference>
<dbReference type="InterPro" id="IPR035985">
    <property type="entry name" value="Ubiquitin-activating_enz"/>
</dbReference>
<dbReference type="NCBIfam" id="TIGR01381">
    <property type="entry name" value="E1_like_apg7"/>
    <property type="match status" value="1"/>
</dbReference>
<dbReference type="PANTHER" id="PTHR10953">
    <property type="entry name" value="UBIQUITIN-ACTIVATING ENZYME E1"/>
    <property type="match status" value="1"/>
</dbReference>
<dbReference type="PANTHER" id="PTHR10953:SF3">
    <property type="entry name" value="UBIQUITIN-LIKE MODIFIER-ACTIVATING ENZYME ATG7"/>
    <property type="match status" value="1"/>
</dbReference>
<dbReference type="Pfam" id="PF16420">
    <property type="entry name" value="ATG7_N"/>
    <property type="match status" value="1"/>
</dbReference>
<dbReference type="Pfam" id="PF00899">
    <property type="entry name" value="ThiF"/>
    <property type="match status" value="1"/>
</dbReference>
<dbReference type="SUPFAM" id="SSF69572">
    <property type="entry name" value="Activating enzymes of the ubiquitin-like proteins"/>
    <property type="match status" value="1"/>
</dbReference>
<keyword id="KW-0002">3D-structure</keyword>
<keyword id="KW-0072">Autophagy</keyword>
<keyword id="KW-0963">Cytoplasm</keyword>
<keyword id="KW-0653">Protein transport</keyword>
<keyword id="KW-1185">Reference proteome</keyword>
<keyword id="KW-0813">Transport</keyword>
<keyword id="KW-0833">Ubl conjugation pathway</keyword>
<organism>
    <name type="scientific">Saccharomyces cerevisiae (strain ATCC 204508 / S288c)</name>
    <name type="common">Baker's yeast</name>
    <dbReference type="NCBI Taxonomy" id="559292"/>
    <lineage>
        <taxon>Eukaryota</taxon>
        <taxon>Fungi</taxon>
        <taxon>Dikarya</taxon>
        <taxon>Ascomycota</taxon>
        <taxon>Saccharomycotina</taxon>
        <taxon>Saccharomycetes</taxon>
        <taxon>Saccharomycetales</taxon>
        <taxon>Saccharomycetaceae</taxon>
        <taxon>Saccharomyces</taxon>
    </lineage>
</organism>
<protein>
    <recommendedName>
        <fullName>Ubiquitin-like modifier-activating enzyme ATG7</fullName>
    </recommendedName>
    <alternativeName>
        <fullName>ATG12-activating enzyme E1 ATG7</fullName>
    </alternativeName>
    <alternativeName>
        <fullName>Autophagy-related protein 7</fullName>
    </alternativeName>
    <alternativeName>
        <fullName>Cytoplasm to vacuole targeting protein 2</fullName>
    </alternativeName>
</protein>
<name>ATG7_YEAST</name>
<accession>P38862</accession>
<accession>D3DLC0</accession>
<evidence type="ECO:0000269" key="1">
    <source>
    </source>
</evidence>
<evidence type="ECO:0000269" key="2">
    <source>
    </source>
</evidence>
<evidence type="ECO:0000269" key="3">
    <source>
    </source>
</evidence>
<evidence type="ECO:0000269" key="4">
    <source>
    </source>
</evidence>
<evidence type="ECO:0000269" key="5">
    <source>
    </source>
</evidence>
<evidence type="ECO:0000269" key="6">
    <source>
    </source>
</evidence>
<evidence type="ECO:0000269" key="7">
    <source>
    </source>
</evidence>
<evidence type="ECO:0000269" key="8">
    <source>
    </source>
</evidence>
<evidence type="ECO:0000269" key="9">
    <source>
    </source>
</evidence>
<evidence type="ECO:0000269" key="10">
    <source>
    </source>
</evidence>
<evidence type="ECO:0000269" key="11">
    <source>
    </source>
</evidence>
<evidence type="ECO:0000269" key="12">
    <source>
    </source>
</evidence>
<evidence type="ECO:0000269" key="13">
    <source>
    </source>
</evidence>
<evidence type="ECO:0000269" key="14">
    <source>
    </source>
</evidence>
<evidence type="ECO:0000269" key="15">
    <source>
    </source>
</evidence>
<evidence type="ECO:0000269" key="16">
    <source>
    </source>
</evidence>
<evidence type="ECO:0000269" key="17">
    <source>
    </source>
</evidence>
<evidence type="ECO:0000269" key="18">
    <source>
    </source>
</evidence>
<evidence type="ECO:0000269" key="19">
    <source>
    </source>
</evidence>
<evidence type="ECO:0000269" key="20">
    <source>
    </source>
</evidence>
<evidence type="ECO:0000269" key="21">
    <source>
    </source>
</evidence>
<evidence type="ECO:0000269" key="22">
    <source>
    </source>
</evidence>
<evidence type="ECO:0000269" key="23">
    <source>
    </source>
</evidence>
<evidence type="ECO:0000269" key="24">
    <source>
    </source>
</evidence>
<evidence type="ECO:0000269" key="25">
    <source>
    </source>
</evidence>
<evidence type="ECO:0000269" key="26">
    <source>
    </source>
</evidence>
<evidence type="ECO:0000269" key="27">
    <source>
    </source>
</evidence>
<evidence type="ECO:0000269" key="28">
    <source>
    </source>
</evidence>
<evidence type="ECO:0000305" key="29"/>
<evidence type="ECO:0007829" key="30">
    <source>
        <dbReference type="PDB" id="2LI5"/>
    </source>
</evidence>
<evidence type="ECO:0007829" key="31">
    <source>
        <dbReference type="PDB" id="3RUI"/>
    </source>
</evidence>
<evidence type="ECO:0007829" key="32">
    <source>
        <dbReference type="PDB" id="3RUJ"/>
    </source>
</evidence>
<evidence type="ECO:0007829" key="33">
    <source>
        <dbReference type="PDB" id="3T7F"/>
    </source>
</evidence>
<evidence type="ECO:0007829" key="34">
    <source>
        <dbReference type="PDB" id="3T7G"/>
    </source>
</evidence>
<evidence type="ECO:0007829" key="35">
    <source>
        <dbReference type="PDB" id="3T7H"/>
    </source>
</evidence>
<evidence type="ECO:0007829" key="36">
    <source>
        <dbReference type="PDB" id="3VH1"/>
    </source>
</evidence>
<evidence type="ECO:0007829" key="37">
    <source>
        <dbReference type="PDB" id="3VH2"/>
    </source>
</evidence>
<evidence type="ECO:0007829" key="38">
    <source>
        <dbReference type="PDB" id="3VH4"/>
    </source>
</evidence>
<evidence type="ECO:0007829" key="39">
    <source>
        <dbReference type="PDB" id="4GSK"/>
    </source>
</evidence>
<evidence type="ECO:0007829" key="40">
    <source>
        <dbReference type="PDB" id="4GSL"/>
    </source>
</evidence>
<feature type="chain" id="PRO_0000212822" description="Ubiquitin-like modifier-activating enzyme ATG7">
    <location>
        <begin position="1"/>
        <end position="630"/>
    </location>
</feature>
<feature type="region of interest" description="Homodimerization">
    <location>
        <begin position="591"/>
        <end position="630"/>
    </location>
</feature>
<feature type="short sequence motif" description="GXGXXG motif">
    <location>
        <begin position="331"/>
        <end position="336"/>
    </location>
</feature>
<feature type="active site" description="Glycyl thioester intermediate" evidence="25">
    <location>
        <position position="507"/>
    </location>
</feature>
<feature type="mutagenesis site" description="Loss of interaction with ATG8 and ATG12, and no more ATG12-ATG5 conjugate. Defect in Cvt pathway and autophagy." evidence="2 3">
    <original>G</original>
    <variation>A</variation>
    <location>
        <position position="333"/>
    </location>
</feature>
<feature type="mutagenesis site" description="Loss of interaction with ATG8." evidence="19">
    <original>R</original>
    <variation>A</variation>
    <location>
        <position position="443"/>
    </location>
</feature>
<feature type="mutagenesis site" description="Loss of interaction with ATG8; when associated with F-486 and A-490." evidence="19">
    <original>S</original>
    <variation>A</variation>
    <location>
        <position position="466"/>
    </location>
</feature>
<feature type="mutagenesis site" description="Loss of interaction with ATG8; when associated with A-466 and A-490." evidence="19">
    <original>Y</original>
    <variation>F</variation>
    <location>
        <position position="486"/>
    </location>
</feature>
<feature type="mutagenesis site" description="Loss of interaction with ATG8; when associated with A-466 and F-486." evidence="19">
    <original>D</original>
    <variation>A</variation>
    <location>
        <position position="490"/>
    </location>
</feature>
<feature type="mutagenesis site" description="Loss of interaction with ATG8 and ATG12 and no more formation of ATG12-ATG5 conjugate. Defect in Cvt pathway and autophagy." evidence="2 3 7 25">
    <original>C</original>
    <variation>A</variation>
    <location>
        <position position="507"/>
    </location>
</feature>
<feature type="mutagenesis site" description="Instead of the formation of an intermediate complex with a thiol ester bond between ATG7 (E1-like enzyme) and ATG8 (substrate) or between ATG7 and ATG12 (substrate), a stable complex with an O-ester bond is formed. No more formation of ATG12-ATG5 conjugate." evidence="2 3 7">
    <original>C</original>
    <variation>S</variation>
    <location>
        <position position="507"/>
    </location>
</feature>
<feature type="mutagenesis site" description="Impaired homodimerization and ATP-binding. Homodimerization and ATP-binding are recovered when it heterodimerizes with an ATG7 molecule with a R-524 mutation." evidence="25">
    <original>R</original>
    <variation>A</variation>
    <location>
        <position position="511"/>
    </location>
</feature>
<feature type="mutagenesis site" description="Impaired homodimerization and ATP-binding. Homodimerization and ATP-binding are recovered when it heterodimerizes with an ATG7 molecule with a A-511 mutation." evidence="25">
    <original>E</original>
    <variation>R</variation>
    <location>
        <position position="524"/>
    </location>
</feature>
<feature type="mutagenesis site" description="Loss of interaction with ATG8." evidence="19">
    <original>R</original>
    <variation>A</variation>
    <location>
        <position position="550"/>
    </location>
</feature>
<feature type="strand" evidence="35">
    <location>
        <begin position="12"/>
        <end position="17"/>
    </location>
</feature>
<feature type="helix" evidence="35">
    <location>
        <begin position="19"/>
        <end position="29"/>
    </location>
</feature>
<feature type="turn" evidence="34">
    <location>
        <begin position="32"/>
        <end position="34"/>
    </location>
</feature>
<feature type="strand" evidence="35">
    <location>
        <begin position="36"/>
        <end position="46"/>
    </location>
</feature>
<feature type="strand" evidence="37">
    <location>
        <begin position="48"/>
        <end position="50"/>
    </location>
</feature>
<feature type="strand" evidence="35">
    <location>
        <begin position="56"/>
        <end position="62"/>
    </location>
</feature>
<feature type="helix" evidence="35">
    <location>
        <begin position="64"/>
        <end position="67"/>
    </location>
</feature>
<feature type="strand" evidence="40">
    <location>
        <begin position="68"/>
        <end position="70"/>
    </location>
</feature>
<feature type="strand" evidence="35">
    <location>
        <begin position="78"/>
        <end position="89"/>
    </location>
</feature>
<feature type="helix" evidence="35">
    <location>
        <begin position="90"/>
        <end position="95"/>
    </location>
</feature>
<feature type="helix" evidence="35">
    <location>
        <begin position="98"/>
        <end position="113"/>
    </location>
</feature>
<feature type="helix" evidence="35">
    <location>
        <begin position="117"/>
        <end position="119"/>
    </location>
</feature>
<feature type="strand" evidence="35">
    <location>
        <begin position="123"/>
        <end position="130"/>
    </location>
</feature>
<feature type="turn" evidence="35">
    <location>
        <begin position="131"/>
        <end position="134"/>
    </location>
</feature>
<feature type="strand" evidence="35">
    <location>
        <begin position="135"/>
        <end position="148"/>
    </location>
</feature>
<feature type="strand" evidence="35">
    <location>
        <begin position="151"/>
        <end position="157"/>
    </location>
</feature>
<feature type="helix" evidence="35">
    <location>
        <begin position="159"/>
        <end position="164"/>
    </location>
</feature>
<feature type="helix" evidence="35">
    <location>
        <begin position="165"/>
        <end position="174"/>
    </location>
</feature>
<feature type="strand" evidence="35">
    <location>
        <begin position="179"/>
        <end position="183"/>
    </location>
</feature>
<feature type="strand" evidence="35">
    <location>
        <begin position="189"/>
        <end position="191"/>
    </location>
</feature>
<feature type="helix" evidence="35">
    <location>
        <begin position="194"/>
        <end position="200"/>
    </location>
</feature>
<feature type="strand" evidence="35">
    <location>
        <begin position="202"/>
        <end position="206"/>
    </location>
</feature>
<feature type="helix" evidence="35">
    <location>
        <begin position="219"/>
        <end position="229"/>
    </location>
</feature>
<feature type="strand" evidence="35">
    <location>
        <begin position="235"/>
        <end position="241"/>
    </location>
</feature>
<feature type="strand" evidence="35">
    <location>
        <begin position="243"/>
        <end position="245"/>
    </location>
</feature>
<feature type="strand" evidence="35">
    <location>
        <begin position="248"/>
        <end position="256"/>
    </location>
</feature>
<feature type="strand" evidence="33">
    <location>
        <begin position="263"/>
        <end position="265"/>
    </location>
</feature>
<feature type="strand" evidence="35">
    <location>
        <begin position="269"/>
        <end position="273"/>
    </location>
</feature>
<feature type="strand" evidence="35">
    <location>
        <begin position="279"/>
        <end position="281"/>
    </location>
</feature>
<feature type="strand" evidence="35">
    <location>
        <begin position="284"/>
        <end position="287"/>
    </location>
</feature>
<feature type="helix" evidence="32">
    <location>
        <begin position="289"/>
        <end position="291"/>
    </location>
</feature>
<feature type="helix" evidence="31">
    <location>
        <begin position="294"/>
        <end position="312"/>
    </location>
</feature>
<feature type="helix" evidence="31">
    <location>
        <begin position="319"/>
        <end position="323"/>
    </location>
</feature>
<feature type="strand" evidence="31">
    <location>
        <begin position="326"/>
        <end position="330"/>
    </location>
</feature>
<feature type="helix" evidence="31">
    <location>
        <begin position="334"/>
        <end position="345"/>
    </location>
</feature>
<feature type="strand" evidence="31">
    <location>
        <begin position="350"/>
        <end position="354"/>
    </location>
</feature>
<feature type="turn" evidence="31">
    <location>
        <begin position="364"/>
        <end position="366"/>
    </location>
</feature>
<feature type="helix" evidence="31">
    <location>
        <begin position="372"/>
        <end position="374"/>
    </location>
</feature>
<feature type="strand" evidence="36">
    <location>
        <begin position="376"/>
        <end position="378"/>
    </location>
</feature>
<feature type="helix" evidence="31">
    <location>
        <begin position="379"/>
        <end position="390"/>
    </location>
</feature>
<feature type="strand" evidence="39">
    <location>
        <begin position="391"/>
        <end position="393"/>
    </location>
</feature>
<feature type="strand" evidence="31">
    <location>
        <begin position="395"/>
        <end position="399"/>
    </location>
</feature>
<feature type="helix" evidence="31">
    <location>
        <begin position="413"/>
        <end position="429"/>
    </location>
</feature>
<feature type="strand" evidence="31">
    <location>
        <begin position="431"/>
        <end position="435"/>
    </location>
</feature>
<feature type="strand" evidence="38">
    <location>
        <begin position="438"/>
        <end position="440"/>
    </location>
</feature>
<feature type="helix" evidence="31">
    <location>
        <begin position="441"/>
        <end position="443"/>
    </location>
</feature>
<feature type="helix" evidence="31">
    <location>
        <begin position="444"/>
        <end position="452"/>
    </location>
</feature>
<feature type="strand" evidence="31">
    <location>
        <begin position="456"/>
        <end position="462"/>
    </location>
</feature>
<feature type="strand" evidence="31">
    <location>
        <begin position="464"/>
        <end position="471"/>
    </location>
</feature>
<feature type="helix" evidence="31">
    <location>
        <begin position="486"/>
        <end position="489"/>
    </location>
</feature>
<feature type="strand" evidence="31">
    <location>
        <begin position="490"/>
        <end position="492"/>
    </location>
</feature>
<feature type="strand" evidence="36">
    <location>
        <begin position="494"/>
        <end position="496"/>
    </location>
</feature>
<feature type="turn" evidence="31">
    <location>
        <begin position="498"/>
        <end position="500"/>
    </location>
</feature>
<feature type="helix" evidence="31">
    <location>
        <begin position="504"/>
        <end position="508"/>
    </location>
</feature>
<feature type="helix" evidence="31">
    <location>
        <begin position="513"/>
        <end position="529"/>
    </location>
</feature>
<feature type="strand" evidence="31">
    <location>
        <begin position="537"/>
        <end position="540"/>
    </location>
</feature>
<feature type="strand" evidence="31">
    <location>
        <begin position="547"/>
        <end position="552"/>
    </location>
</feature>
<feature type="turn" evidence="31">
    <location>
        <begin position="553"/>
        <end position="556"/>
    </location>
</feature>
<feature type="strand" evidence="31">
    <location>
        <begin position="557"/>
        <end position="561"/>
    </location>
</feature>
<feature type="turn" evidence="31">
    <location>
        <begin position="570"/>
        <end position="572"/>
    </location>
</feature>
<feature type="helix" evidence="31">
    <location>
        <begin position="574"/>
        <end position="583"/>
    </location>
</feature>
<feature type="helix" evidence="31">
    <location>
        <begin position="585"/>
        <end position="593"/>
    </location>
</feature>
<feature type="helix" evidence="31">
    <location>
        <begin position="595"/>
        <end position="602"/>
    </location>
</feature>
<feature type="helix" evidence="31">
    <location>
        <begin position="604"/>
        <end position="612"/>
    </location>
</feature>
<feature type="helix" evidence="30">
    <location>
        <begin position="616"/>
        <end position="618"/>
    </location>
</feature>
<feature type="helix" evidence="30">
    <location>
        <begin position="627"/>
        <end position="629"/>
    </location>
</feature>